<comment type="function">
    <text evidence="1">Aspartyl-tRNA synthetase with relaxed tRNA specificity since it is able to aspartylate not only its cognate tRNA(Asp) but also tRNA(Asn). Reaction proceeds in two steps: L-aspartate is first activated by ATP to form Asp-AMP and then transferred to the acceptor end of tRNA(Asp/Asn).</text>
</comment>
<comment type="catalytic activity">
    <reaction evidence="1">
        <text>tRNA(Asx) + L-aspartate + ATP = L-aspartyl-tRNA(Asx) + AMP + diphosphate</text>
        <dbReference type="Rhea" id="RHEA:18349"/>
        <dbReference type="Rhea" id="RHEA-COMP:9710"/>
        <dbReference type="Rhea" id="RHEA-COMP:9711"/>
        <dbReference type="ChEBI" id="CHEBI:29991"/>
        <dbReference type="ChEBI" id="CHEBI:30616"/>
        <dbReference type="ChEBI" id="CHEBI:33019"/>
        <dbReference type="ChEBI" id="CHEBI:78442"/>
        <dbReference type="ChEBI" id="CHEBI:78516"/>
        <dbReference type="ChEBI" id="CHEBI:456215"/>
        <dbReference type="EC" id="6.1.1.23"/>
    </reaction>
</comment>
<comment type="subunit">
    <text evidence="1">Homodimer.</text>
</comment>
<comment type="subcellular location">
    <subcellularLocation>
        <location evidence="1">Cytoplasm</location>
    </subcellularLocation>
</comment>
<comment type="similarity">
    <text evidence="1">Belongs to the class-II aminoacyl-tRNA synthetase family. Type 1 subfamily.</text>
</comment>
<sequence>MSMRTEYCGLVTEHLLGQTVSLCGWVQRRRDHGGVIFIDLRDREGLVQVVCDPDRAEMFATAEGVRNEFCVQIKGLVRNRPEGTVNAGLKSGKIEVLCHELNVLNASVTPPFQLDDDNLSETTRLTHRVLDLRRPQMQHNLRLRYRVAIEARKYLDEQGFIDIETPMLTKSTPEGARDYLVPSRVNAGQFFALPQSPQLFKQLLMVANFDRYYQITKCFRDEDLRADRQPEFTQIDCETSFLGEQEIRDLFEDMIRHIFKTTIDVELDATFPVMPYSEAMARFGSDKPDLRVQLEFTELTDAMKDVDFKVFSTPANAKDGRVAALRVPKGGELSRGDIDGYTEFVRIYGAKGLAWIKVNEKAKGRDGLQSPIVKNLHDASIAAILERTGAEDGDIIFFAADRAKVVNDSLGALRLKIGHSEFGKANGLVQAGWKPLWVVDFPMFEYDDEDARYVAAHHPFTSPKDEHLEYLETDPGRCLAKAYDMVLNGWEIGGGSVRIHREEVQSKVFRALKIGAEEAQLKFGFLLDALQYGAPPHGGIAFGLDRIVTMMAGADSIRDVIAFPKTQRAQDLLTQAPSPVDERQLRELHIRLRQPEQPKA</sequence>
<accession>Q0BBZ1</accession>
<name>SYDND_BURCM</name>
<reference key="1">
    <citation type="submission" date="2006-08" db="EMBL/GenBank/DDBJ databases">
        <title>Complete sequence of chromosome 1 of Burkholderia cepacia AMMD.</title>
        <authorList>
            <person name="Copeland A."/>
            <person name="Lucas S."/>
            <person name="Lapidus A."/>
            <person name="Barry K."/>
            <person name="Detter J.C."/>
            <person name="Glavina del Rio T."/>
            <person name="Hammon N."/>
            <person name="Israni S."/>
            <person name="Pitluck S."/>
            <person name="Bruce D."/>
            <person name="Chain P."/>
            <person name="Malfatti S."/>
            <person name="Shin M."/>
            <person name="Vergez L."/>
            <person name="Schmutz J."/>
            <person name="Larimer F."/>
            <person name="Land M."/>
            <person name="Hauser L."/>
            <person name="Kyrpides N."/>
            <person name="Kim E."/>
            <person name="Parke J."/>
            <person name="Coenye T."/>
            <person name="Konstantinidis K."/>
            <person name="Ramette A."/>
            <person name="Tiedje J."/>
            <person name="Richardson P."/>
        </authorList>
    </citation>
    <scope>NUCLEOTIDE SEQUENCE [LARGE SCALE GENOMIC DNA]</scope>
    <source>
        <strain>ATCC BAA-244 / DSM 16087 / CCUG 44356 / LMG 19182 / AMMD</strain>
    </source>
</reference>
<gene>
    <name evidence="1" type="primary">aspS</name>
    <name type="ordered locus">Bamb_2776</name>
</gene>
<feature type="chain" id="PRO_1000006646" description="Aspartate--tRNA(Asp/Asn) ligase">
    <location>
        <begin position="1"/>
        <end position="600"/>
    </location>
</feature>
<feature type="region of interest" description="Aspartate" evidence="1">
    <location>
        <begin position="198"/>
        <end position="201"/>
    </location>
</feature>
<feature type="binding site" evidence="1">
    <location>
        <position position="174"/>
    </location>
    <ligand>
        <name>L-aspartate</name>
        <dbReference type="ChEBI" id="CHEBI:29991"/>
    </ligand>
</feature>
<feature type="binding site" evidence="1">
    <location>
        <begin position="220"/>
        <end position="222"/>
    </location>
    <ligand>
        <name>ATP</name>
        <dbReference type="ChEBI" id="CHEBI:30616"/>
    </ligand>
</feature>
<feature type="binding site" evidence="1">
    <location>
        <position position="220"/>
    </location>
    <ligand>
        <name>L-aspartate</name>
        <dbReference type="ChEBI" id="CHEBI:29991"/>
    </ligand>
</feature>
<feature type="binding site" evidence="1">
    <location>
        <position position="229"/>
    </location>
    <ligand>
        <name>ATP</name>
        <dbReference type="ChEBI" id="CHEBI:30616"/>
    </ligand>
</feature>
<feature type="binding site" evidence="1">
    <location>
        <position position="457"/>
    </location>
    <ligand>
        <name>L-aspartate</name>
        <dbReference type="ChEBI" id="CHEBI:29991"/>
    </ligand>
</feature>
<feature type="binding site" evidence="1">
    <location>
        <position position="491"/>
    </location>
    <ligand>
        <name>ATP</name>
        <dbReference type="ChEBI" id="CHEBI:30616"/>
    </ligand>
</feature>
<feature type="binding site" evidence="1">
    <location>
        <position position="498"/>
    </location>
    <ligand>
        <name>L-aspartate</name>
        <dbReference type="ChEBI" id="CHEBI:29991"/>
    </ligand>
</feature>
<feature type="binding site" evidence="1">
    <location>
        <begin position="543"/>
        <end position="546"/>
    </location>
    <ligand>
        <name>ATP</name>
        <dbReference type="ChEBI" id="CHEBI:30616"/>
    </ligand>
</feature>
<feature type="site" description="Important for tRNA non-discrimination" evidence="1">
    <location>
        <position position="32"/>
    </location>
</feature>
<feature type="site" description="Important for tRNA non-discrimination" evidence="1">
    <location>
        <position position="83"/>
    </location>
</feature>
<keyword id="KW-0030">Aminoacyl-tRNA synthetase</keyword>
<keyword id="KW-0067">ATP-binding</keyword>
<keyword id="KW-0963">Cytoplasm</keyword>
<keyword id="KW-0436">Ligase</keyword>
<keyword id="KW-0547">Nucleotide-binding</keyword>
<keyword id="KW-0648">Protein biosynthesis</keyword>
<protein>
    <recommendedName>
        <fullName evidence="1">Aspartate--tRNA(Asp/Asn) ligase</fullName>
        <ecNumber evidence="1">6.1.1.23</ecNumber>
    </recommendedName>
    <alternativeName>
        <fullName evidence="1">Aspartyl-tRNA synthetase</fullName>
        <shortName evidence="1">AspRS</shortName>
    </alternativeName>
    <alternativeName>
        <fullName evidence="1">Non-discriminating aspartyl-tRNA synthetase</fullName>
        <shortName evidence="1">ND-AspRS</shortName>
    </alternativeName>
</protein>
<organism>
    <name type="scientific">Burkholderia ambifaria (strain ATCC BAA-244 / DSM 16087 / CCUG 44356 / LMG 19182 / AMMD)</name>
    <name type="common">Burkholderia cepacia (strain AMMD)</name>
    <dbReference type="NCBI Taxonomy" id="339670"/>
    <lineage>
        <taxon>Bacteria</taxon>
        <taxon>Pseudomonadati</taxon>
        <taxon>Pseudomonadota</taxon>
        <taxon>Betaproteobacteria</taxon>
        <taxon>Burkholderiales</taxon>
        <taxon>Burkholderiaceae</taxon>
        <taxon>Burkholderia</taxon>
        <taxon>Burkholderia cepacia complex</taxon>
    </lineage>
</organism>
<dbReference type="EC" id="6.1.1.23" evidence="1"/>
<dbReference type="EMBL" id="CP000440">
    <property type="protein sequence ID" value="ABI88332.1"/>
    <property type="molecule type" value="Genomic_DNA"/>
</dbReference>
<dbReference type="RefSeq" id="WP_011657896.1">
    <property type="nucleotide sequence ID" value="NZ_CP009798.1"/>
</dbReference>
<dbReference type="SMR" id="Q0BBZ1"/>
<dbReference type="GeneID" id="93085023"/>
<dbReference type="KEGG" id="bam:Bamb_2776"/>
<dbReference type="PATRIC" id="fig|339670.21.peg.2115"/>
<dbReference type="eggNOG" id="COG0173">
    <property type="taxonomic scope" value="Bacteria"/>
</dbReference>
<dbReference type="Proteomes" id="UP000000662">
    <property type="component" value="Chromosome 1"/>
</dbReference>
<dbReference type="GO" id="GO:0005737">
    <property type="term" value="C:cytoplasm"/>
    <property type="evidence" value="ECO:0007669"/>
    <property type="project" value="UniProtKB-SubCell"/>
</dbReference>
<dbReference type="GO" id="GO:0004815">
    <property type="term" value="F:aspartate-tRNA ligase activity"/>
    <property type="evidence" value="ECO:0007669"/>
    <property type="project" value="UniProtKB-UniRule"/>
</dbReference>
<dbReference type="GO" id="GO:0050560">
    <property type="term" value="F:aspartate-tRNA(Asn) ligase activity"/>
    <property type="evidence" value="ECO:0007669"/>
    <property type="project" value="UniProtKB-EC"/>
</dbReference>
<dbReference type="GO" id="GO:0005524">
    <property type="term" value="F:ATP binding"/>
    <property type="evidence" value="ECO:0007669"/>
    <property type="project" value="UniProtKB-UniRule"/>
</dbReference>
<dbReference type="GO" id="GO:0003676">
    <property type="term" value="F:nucleic acid binding"/>
    <property type="evidence" value="ECO:0007669"/>
    <property type="project" value="InterPro"/>
</dbReference>
<dbReference type="GO" id="GO:0006422">
    <property type="term" value="P:aspartyl-tRNA aminoacylation"/>
    <property type="evidence" value="ECO:0007669"/>
    <property type="project" value="UniProtKB-UniRule"/>
</dbReference>
<dbReference type="CDD" id="cd00777">
    <property type="entry name" value="AspRS_core"/>
    <property type="match status" value="1"/>
</dbReference>
<dbReference type="CDD" id="cd04317">
    <property type="entry name" value="EcAspRS_like_N"/>
    <property type="match status" value="1"/>
</dbReference>
<dbReference type="Gene3D" id="3.30.930.10">
    <property type="entry name" value="Bira Bifunctional Protein, Domain 2"/>
    <property type="match status" value="1"/>
</dbReference>
<dbReference type="Gene3D" id="3.30.1360.30">
    <property type="entry name" value="GAD-like domain"/>
    <property type="match status" value="1"/>
</dbReference>
<dbReference type="Gene3D" id="2.40.50.140">
    <property type="entry name" value="Nucleic acid-binding proteins"/>
    <property type="match status" value="1"/>
</dbReference>
<dbReference type="HAMAP" id="MF_00044">
    <property type="entry name" value="Asp_tRNA_synth_type1"/>
    <property type="match status" value="1"/>
</dbReference>
<dbReference type="InterPro" id="IPR004364">
    <property type="entry name" value="Aa-tRNA-synt_II"/>
</dbReference>
<dbReference type="InterPro" id="IPR006195">
    <property type="entry name" value="aa-tRNA-synth_II"/>
</dbReference>
<dbReference type="InterPro" id="IPR045864">
    <property type="entry name" value="aa-tRNA-synth_II/BPL/LPL"/>
</dbReference>
<dbReference type="InterPro" id="IPR004524">
    <property type="entry name" value="Asp-tRNA-ligase_1"/>
</dbReference>
<dbReference type="InterPro" id="IPR047089">
    <property type="entry name" value="Asp-tRNA-ligase_1_N"/>
</dbReference>
<dbReference type="InterPro" id="IPR002312">
    <property type="entry name" value="Asp/Asn-tRNA-synth_IIb"/>
</dbReference>
<dbReference type="InterPro" id="IPR047090">
    <property type="entry name" value="AspRS_core"/>
</dbReference>
<dbReference type="InterPro" id="IPR004115">
    <property type="entry name" value="GAD-like_sf"/>
</dbReference>
<dbReference type="InterPro" id="IPR029351">
    <property type="entry name" value="GAD_dom"/>
</dbReference>
<dbReference type="InterPro" id="IPR012340">
    <property type="entry name" value="NA-bd_OB-fold"/>
</dbReference>
<dbReference type="InterPro" id="IPR004365">
    <property type="entry name" value="NA-bd_OB_tRNA"/>
</dbReference>
<dbReference type="NCBIfam" id="TIGR00459">
    <property type="entry name" value="aspS_bact"/>
    <property type="match status" value="1"/>
</dbReference>
<dbReference type="NCBIfam" id="NF001750">
    <property type="entry name" value="PRK00476.1"/>
    <property type="match status" value="1"/>
</dbReference>
<dbReference type="PANTHER" id="PTHR22594:SF5">
    <property type="entry name" value="ASPARTATE--TRNA LIGASE, MITOCHONDRIAL"/>
    <property type="match status" value="1"/>
</dbReference>
<dbReference type="PANTHER" id="PTHR22594">
    <property type="entry name" value="ASPARTYL/LYSYL-TRNA SYNTHETASE"/>
    <property type="match status" value="1"/>
</dbReference>
<dbReference type="Pfam" id="PF02938">
    <property type="entry name" value="GAD"/>
    <property type="match status" value="1"/>
</dbReference>
<dbReference type="Pfam" id="PF00152">
    <property type="entry name" value="tRNA-synt_2"/>
    <property type="match status" value="1"/>
</dbReference>
<dbReference type="Pfam" id="PF01336">
    <property type="entry name" value="tRNA_anti-codon"/>
    <property type="match status" value="1"/>
</dbReference>
<dbReference type="PRINTS" id="PR01042">
    <property type="entry name" value="TRNASYNTHASP"/>
</dbReference>
<dbReference type="SUPFAM" id="SSF55681">
    <property type="entry name" value="Class II aaRS and biotin synthetases"/>
    <property type="match status" value="1"/>
</dbReference>
<dbReference type="SUPFAM" id="SSF55261">
    <property type="entry name" value="GAD domain-like"/>
    <property type="match status" value="1"/>
</dbReference>
<dbReference type="SUPFAM" id="SSF50249">
    <property type="entry name" value="Nucleic acid-binding proteins"/>
    <property type="match status" value="1"/>
</dbReference>
<dbReference type="PROSITE" id="PS50862">
    <property type="entry name" value="AA_TRNA_LIGASE_II"/>
    <property type="match status" value="1"/>
</dbReference>
<proteinExistence type="inferred from homology"/>
<evidence type="ECO:0000255" key="1">
    <source>
        <dbReference type="HAMAP-Rule" id="MF_00044"/>
    </source>
</evidence>